<protein>
    <recommendedName>
        <fullName>Septin-5</fullName>
    </recommendedName>
    <alternativeName>
        <fullName>Cell division control-related protein 1</fullName>
        <shortName>CDCrel-1</shortName>
    </alternativeName>
    <alternativeName>
        <fullName>Peanut-like protein 1</fullName>
    </alternativeName>
</protein>
<dbReference type="EMBL" id="AK134700">
    <property type="protein sequence ID" value="BAE22248.1"/>
    <property type="molecule type" value="mRNA"/>
</dbReference>
<dbReference type="EMBL" id="BC059848">
    <property type="protein sequence ID" value="AAH59848.1"/>
    <property type="molecule type" value="mRNA"/>
</dbReference>
<dbReference type="EMBL" id="BC141073">
    <property type="protein sequence ID" value="AAI41074.1"/>
    <property type="molecule type" value="mRNA"/>
</dbReference>
<dbReference type="EMBL" id="BC145331">
    <property type="protein sequence ID" value="AAI45332.1"/>
    <property type="molecule type" value="mRNA"/>
</dbReference>
<dbReference type="EMBL" id="AF033350">
    <property type="protein sequence ID" value="AAC83974.1"/>
    <property type="molecule type" value="mRNA"/>
</dbReference>
<dbReference type="CCDS" id="CCDS57021.1"/>
<dbReference type="RefSeq" id="NP_998779.2">
    <property type="nucleotide sequence ID" value="NM_213614.2"/>
</dbReference>
<dbReference type="SMR" id="Q9Z2Q6"/>
<dbReference type="BioGRID" id="202285">
    <property type="interactions" value="19"/>
</dbReference>
<dbReference type="FunCoup" id="Q9Z2Q6">
    <property type="interactions" value="325"/>
</dbReference>
<dbReference type="IntAct" id="Q9Z2Q6">
    <property type="interactions" value="7"/>
</dbReference>
<dbReference type="MINT" id="Q9Z2Q6"/>
<dbReference type="STRING" id="10090.ENSMUSP00000094750"/>
<dbReference type="GlyGen" id="Q9Z2Q6">
    <property type="glycosylation" value="2 sites, 1 O-linked glycan (1 site)"/>
</dbReference>
<dbReference type="iPTMnet" id="Q9Z2Q6"/>
<dbReference type="PhosphoSitePlus" id="Q9Z2Q6"/>
<dbReference type="SwissPalm" id="Q9Z2Q6"/>
<dbReference type="jPOST" id="Q9Z2Q6"/>
<dbReference type="PaxDb" id="10090-ENSMUSP00000094750"/>
<dbReference type="PeptideAtlas" id="Q9Z2Q6"/>
<dbReference type="ProteomicsDB" id="261155"/>
<dbReference type="Pumba" id="Q9Z2Q6"/>
<dbReference type="DNASU" id="18951"/>
<dbReference type="Ensembl" id="ENSMUST00000096987.7">
    <property type="protein sequence ID" value="ENSMUSP00000094750.6"/>
    <property type="gene ID" value="ENSMUSG00000072214.9"/>
</dbReference>
<dbReference type="GeneID" id="18951"/>
<dbReference type="KEGG" id="mmu:18951"/>
<dbReference type="UCSC" id="uc007yoj.1">
    <property type="organism name" value="mouse"/>
</dbReference>
<dbReference type="AGR" id="MGI:1195461"/>
<dbReference type="CTD" id="5413"/>
<dbReference type="MGI" id="MGI:1195461">
    <property type="gene designation" value="Septin5"/>
</dbReference>
<dbReference type="VEuPathDB" id="HostDB:ENSMUSG00000072214"/>
<dbReference type="eggNOG" id="KOG2655">
    <property type="taxonomic scope" value="Eukaryota"/>
</dbReference>
<dbReference type="GeneTree" id="ENSGT00940000159913"/>
<dbReference type="HOGENOM" id="CLU_017718_0_0_1"/>
<dbReference type="InParanoid" id="Q9Z2Q6"/>
<dbReference type="OrthoDB" id="416553at2759"/>
<dbReference type="PhylomeDB" id="Q9Z2Q6"/>
<dbReference type="TreeFam" id="TF101079"/>
<dbReference type="BioGRID-ORCS" id="18951">
    <property type="hits" value="0 hits in 51 CRISPR screens"/>
</dbReference>
<dbReference type="CD-CODE" id="CE726F99">
    <property type="entry name" value="Postsynaptic density"/>
</dbReference>
<dbReference type="PRO" id="PR:Q9Z2Q6"/>
<dbReference type="Proteomes" id="UP000000589">
    <property type="component" value="Chromosome 16"/>
</dbReference>
<dbReference type="RNAct" id="Q9Z2Q6">
    <property type="molecule type" value="protein"/>
</dbReference>
<dbReference type="Bgee" id="ENSMUSG00000072214">
    <property type="expression patterns" value="Expressed in superior frontal gyrus and 124 other cell types or tissues"/>
</dbReference>
<dbReference type="ExpressionAtlas" id="Q9Z2Q6">
    <property type="expression patterns" value="baseline and differential"/>
</dbReference>
<dbReference type="GO" id="GO:0043679">
    <property type="term" value="C:axon terminus"/>
    <property type="evidence" value="ECO:0000314"/>
    <property type="project" value="MGI"/>
</dbReference>
<dbReference type="GO" id="GO:0044305">
    <property type="term" value="C:calyx of Held"/>
    <property type="evidence" value="ECO:0000314"/>
    <property type="project" value="SynGO"/>
</dbReference>
<dbReference type="GO" id="GO:0005938">
    <property type="term" value="C:cell cortex"/>
    <property type="evidence" value="ECO:0000314"/>
    <property type="project" value="MGI"/>
</dbReference>
<dbReference type="GO" id="GO:0005886">
    <property type="term" value="C:plasma membrane"/>
    <property type="evidence" value="ECO:0000250"/>
    <property type="project" value="UniProtKB"/>
</dbReference>
<dbReference type="GO" id="GO:0098793">
    <property type="term" value="C:presynapse"/>
    <property type="evidence" value="ECO:0000314"/>
    <property type="project" value="UniProtKB"/>
</dbReference>
<dbReference type="GO" id="GO:0031105">
    <property type="term" value="C:septin complex"/>
    <property type="evidence" value="ECO:0000314"/>
    <property type="project" value="UniProtKB"/>
</dbReference>
<dbReference type="GO" id="GO:0045202">
    <property type="term" value="C:synapse"/>
    <property type="evidence" value="ECO:0000314"/>
    <property type="project" value="MGI"/>
</dbReference>
<dbReference type="GO" id="GO:0008021">
    <property type="term" value="C:synaptic vesicle"/>
    <property type="evidence" value="ECO:0000314"/>
    <property type="project" value="MGI"/>
</dbReference>
<dbReference type="GO" id="GO:0043195">
    <property type="term" value="C:terminal bouton"/>
    <property type="evidence" value="ECO:0000314"/>
    <property type="project" value="MGI"/>
</dbReference>
<dbReference type="GO" id="GO:0005525">
    <property type="term" value="F:GTP binding"/>
    <property type="evidence" value="ECO:0007669"/>
    <property type="project" value="UniProtKB-KW"/>
</dbReference>
<dbReference type="GO" id="GO:0030534">
    <property type="term" value="P:adult behavior"/>
    <property type="evidence" value="ECO:0000315"/>
    <property type="project" value="UniProtKB"/>
</dbReference>
<dbReference type="GO" id="GO:0051301">
    <property type="term" value="P:cell division"/>
    <property type="evidence" value="ECO:0007669"/>
    <property type="project" value="UniProtKB-KW"/>
</dbReference>
<dbReference type="GO" id="GO:0017157">
    <property type="term" value="P:regulation of exocytosis"/>
    <property type="evidence" value="ECO:0000250"/>
    <property type="project" value="UniProtKB"/>
</dbReference>
<dbReference type="GO" id="GO:0099148">
    <property type="term" value="P:regulation of synaptic vesicle docking"/>
    <property type="evidence" value="ECO:0000314"/>
    <property type="project" value="SynGO"/>
</dbReference>
<dbReference type="GO" id="GO:0035176">
    <property type="term" value="P:social behavior"/>
    <property type="evidence" value="ECO:0000315"/>
    <property type="project" value="UniProtKB"/>
</dbReference>
<dbReference type="CDD" id="cd01850">
    <property type="entry name" value="CDC_Septin"/>
    <property type="match status" value="1"/>
</dbReference>
<dbReference type="FunFam" id="3.40.50.300:FF:000064">
    <property type="entry name" value="Septin 4"/>
    <property type="match status" value="1"/>
</dbReference>
<dbReference type="Gene3D" id="3.40.50.300">
    <property type="entry name" value="P-loop containing nucleotide triphosphate hydrolases"/>
    <property type="match status" value="1"/>
</dbReference>
<dbReference type="InterPro" id="IPR030379">
    <property type="entry name" value="G_SEPTIN_dom"/>
</dbReference>
<dbReference type="InterPro" id="IPR027417">
    <property type="entry name" value="P-loop_NTPase"/>
</dbReference>
<dbReference type="InterPro" id="IPR016491">
    <property type="entry name" value="Septin"/>
</dbReference>
<dbReference type="PANTHER" id="PTHR18884">
    <property type="entry name" value="SEPTIN"/>
    <property type="match status" value="1"/>
</dbReference>
<dbReference type="Pfam" id="PF00735">
    <property type="entry name" value="Septin"/>
    <property type="match status" value="1"/>
</dbReference>
<dbReference type="PIRSF" id="PIRSF006698">
    <property type="entry name" value="Septin"/>
    <property type="match status" value="1"/>
</dbReference>
<dbReference type="SUPFAM" id="SSF52540">
    <property type="entry name" value="P-loop containing nucleoside triphosphate hydrolases"/>
    <property type="match status" value="1"/>
</dbReference>
<dbReference type="PROSITE" id="PS51719">
    <property type="entry name" value="G_SEPTIN"/>
    <property type="match status" value="1"/>
</dbReference>
<reference key="1">
    <citation type="journal article" date="2005" name="Science">
        <title>The transcriptional landscape of the mammalian genome.</title>
        <authorList>
            <person name="Carninci P."/>
            <person name="Kasukawa T."/>
            <person name="Katayama S."/>
            <person name="Gough J."/>
            <person name="Frith M.C."/>
            <person name="Maeda N."/>
            <person name="Oyama R."/>
            <person name="Ravasi T."/>
            <person name="Lenhard B."/>
            <person name="Wells C."/>
            <person name="Kodzius R."/>
            <person name="Shimokawa K."/>
            <person name="Bajic V.B."/>
            <person name="Brenner S.E."/>
            <person name="Batalov S."/>
            <person name="Forrest A.R."/>
            <person name="Zavolan M."/>
            <person name="Davis M.J."/>
            <person name="Wilming L.G."/>
            <person name="Aidinis V."/>
            <person name="Allen J.E."/>
            <person name="Ambesi-Impiombato A."/>
            <person name="Apweiler R."/>
            <person name="Aturaliya R.N."/>
            <person name="Bailey T.L."/>
            <person name="Bansal M."/>
            <person name="Baxter L."/>
            <person name="Beisel K.W."/>
            <person name="Bersano T."/>
            <person name="Bono H."/>
            <person name="Chalk A.M."/>
            <person name="Chiu K.P."/>
            <person name="Choudhary V."/>
            <person name="Christoffels A."/>
            <person name="Clutterbuck D.R."/>
            <person name="Crowe M.L."/>
            <person name="Dalla E."/>
            <person name="Dalrymple B.P."/>
            <person name="de Bono B."/>
            <person name="Della Gatta G."/>
            <person name="di Bernardo D."/>
            <person name="Down T."/>
            <person name="Engstrom P."/>
            <person name="Fagiolini M."/>
            <person name="Faulkner G."/>
            <person name="Fletcher C.F."/>
            <person name="Fukushima T."/>
            <person name="Furuno M."/>
            <person name="Futaki S."/>
            <person name="Gariboldi M."/>
            <person name="Georgii-Hemming P."/>
            <person name="Gingeras T.R."/>
            <person name="Gojobori T."/>
            <person name="Green R.E."/>
            <person name="Gustincich S."/>
            <person name="Harbers M."/>
            <person name="Hayashi Y."/>
            <person name="Hensch T.K."/>
            <person name="Hirokawa N."/>
            <person name="Hill D."/>
            <person name="Huminiecki L."/>
            <person name="Iacono M."/>
            <person name="Ikeo K."/>
            <person name="Iwama A."/>
            <person name="Ishikawa T."/>
            <person name="Jakt M."/>
            <person name="Kanapin A."/>
            <person name="Katoh M."/>
            <person name="Kawasawa Y."/>
            <person name="Kelso J."/>
            <person name="Kitamura H."/>
            <person name="Kitano H."/>
            <person name="Kollias G."/>
            <person name="Krishnan S.P."/>
            <person name="Kruger A."/>
            <person name="Kummerfeld S.K."/>
            <person name="Kurochkin I.V."/>
            <person name="Lareau L.F."/>
            <person name="Lazarevic D."/>
            <person name="Lipovich L."/>
            <person name="Liu J."/>
            <person name="Liuni S."/>
            <person name="McWilliam S."/>
            <person name="Madan Babu M."/>
            <person name="Madera M."/>
            <person name="Marchionni L."/>
            <person name="Matsuda H."/>
            <person name="Matsuzawa S."/>
            <person name="Miki H."/>
            <person name="Mignone F."/>
            <person name="Miyake S."/>
            <person name="Morris K."/>
            <person name="Mottagui-Tabar S."/>
            <person name="Mulder N."/>
            <person name="Nakano N."/>
            <person name="Nakauchi H."/>
            <person name="Ng P."/>
            <person name="Nilsson R."/>
            <person name="Nishiguchi S."/>
            <person name="Nishikawa S."/>
            <person name="Nori F."/>
            <person name="Ohara O."/>
            <person name="Okazaki Y."/>
            <person name="Orlando V."/>
            <person name="Pang K.C."/>
            <person name="Pavan W.J."/>
            <person name="Pavesi G."/>
            <person name="Pesole G."/>
            <person name="Petrovsky N."/>
            <person name="Piazza S."/>
            <person name="Reed J."/>
            <person name="Reid J.F."/>
            <person name="Ring B.Z."/>
            <person name="Ringwald M."/>
            <person name="Rost B."/>
            <person name="Ruan Y."/>
            <person name="Salzberg S.L."/>
            <person name="Sandelin A."/>
            <person name="Schneider C."/>
            <person name="Schoenbach C."/>
            <person name="Sekiguchi K."/>
            <person name="Semple C.A."/>
            <person name="Seno S."/>
            <person name="Sessa L."/>
            <person name="Sheng Y."/>
            <person name="Shibata Y."/>
            <person name="Shimada H."/>
            <person name="Shimada K."/>
            <person name="Silva D."/>
            <person name="Sinclair B."/>
            <person name="Sperling S."/>
            <person name="Stupka E."/>
            <person name="Sugiura K."/>
            <person name="Sultana R."/>
            <person name="Takenaka Y."/>
            <person name="Taki K."/>
            <person name="Tammoja K."/>
            <person name="Tan S.L."/>
            <person name="Tang S."/>
            <person name="Taylor M.S."/>
            <person name="Tegner J."/>
            <person name="Teichmann S.A."/>
            <person name="Ueda H.R."/>
            <person name="van Nimwegen E."/>
            <person name="Verardo R."/>
            <person name="Wei C.L."/>
            <person name="Yagi K."/>
            <person name="Yamanishi H."/>
            <person name="Zabarovsky E."/>
            <person name="Zhu S."/>
            <person name="Zimmer A."/>
            <person name="Hide W."/>
            <person name="Bult C."/>
            <person name="Grimmond S.M."/>
            <person name="Teasdale R.D."/>
            <person name="Liu E.T."/>
            <person name="Brusic V."/>
            <person name="Quackenbush J."/>
            <person name="Wahlestedt C."/>
            <person name="Mattick J.S."/>
            <person name="Hume D.A."/>
            <person name="Kai C."/>
            <person name="Sasaki D."/>
            <person name="Tomaru Y."/>
            <person name="Fukuda S."/>
            <person name="Kanamori-Katayama M."/>
            <person name="Suzuki M."/>
            <person name="Aoki J."/>
            <person name="Arakawa T."/>
            <person name="Iida J."/>
            <person name="Imamura K."/>
            <person name="Itoh M."/>
            <person name="Kato T."/>
            <person name="Kawaji H."/>
            <person name="Kawagashira N."/>
            <person name="Kawashima T."/>
            <person name="Kojima M."/>
            <person name="Kondo S."/>
            <person name="Konno H."/>
            <person name="Nakano K."/>
            <person name="Ninomiya N."/>
            <person name="Nishio T."/>
            <person name="Okada M."/>
            <person name="Plessy C."/>
            <person name="Shibata K."/>
            <person name="Shiraki T."/>
            <person name="Suzuki S."/>
            <person name="Tagami M."/>
            <person name="Waki K."/>
            <person name="Watahiki A."/>
            <person name="Okamura-Oho Y."/>
            <person name="Suzuki H."/>
            <person name="Kawai J."/>
            <person name="Hayashizaki Y."/>
        </authorList>
    </citation>
    <scope>NUCLEOTIDE SEQUENCE [LARGE SCALE MRNA]</scope>
    <source>
        <strain>C57BL/6J</strain>
        <tissue>Medulla oblongata</tissue>
    </source>
</reference>
<reference key="2">
    <citation type="journal article" date="2004" name="Genome Res.">
        <title>The status, quality, and expansion of the NIH full-length cDNA project: the Mammalian Gene Collection (MGC).</title>
        <authorList>
            <consortium name="The MGC Project Team"/>
        </authorList>
    </citation>
    <scope>NUCLEOTIDE SEQUENCE [LARGE SCALE MRNA]</scope>
    <source>
        <strain>C57BL/6J</strain>
        <tissue>Brain</tissue>
    </source>
</reference>
<reference key="3">
    <citation type="submission" date="1997-11" db="EMBL/GenBank/DDBJ databases">
        <title>CDCREL-1, a septin deleted in DiGeorge Syndrome, is expressed in the developing brain and cartilage primordia in mouse embryogenesis.</title>
        <authorList>
            <person name="Botta A."/>
            <person name="Lindsay E.A."/>
            <person name="Jurecic V."/>
            <person name="Zieger B."/>
            <person name="Ware J."/>
            <person name="Baldini A."/>
        </authorList>
    </citation>
    <scope>NUCLEOTIDE SEQUENCE [MRNA] OF 23-369</scope>
    <source>
        <strain>C57BL/6J</strain>
        <tissue>Brain</tissue>
        <tissue>Cartilage</tissue>
        <tissue>Skin</tissue>
    </source>
</reference>
<reference key="4">
    <citation type="submission" date="2007-04" db="UniProtKB">
        <authorList>
            <person name="Lubec G."/>
            <person name="Klug S."/>
            <person name="Kang S.U."/>
        </authorList>
    </citation>
    <scope>PROTEIN SEQUENCE OF 23-36; 58-71; 82-90; 182-190; 240-256; 264-282 AND 297-308</scope>
    <scope>IDENTIFICATION BY MASS SPECTROMETRY</scope>
    <source>
        <strain>C57BL/6J</strain>
        <tissue>Brain</tissue>
        <tissue>Hippocampus</tissue>
    </source>
</reference>
<reference key="5">
    <citation type="journal article" date="2000" name="Proc. Natl. Acad. Sci. U.S.A.">
        <title>Parkin functions as an E2-dependent ubiquitin-protein ligase and promotes the degradation of the synaptic vesicle-associated protein, CDCrel-1.</title>
        <authorList>
            <person name="Zhang Y."/>
            <person name="Gao J."/>
            <person name="Chung K.K.K."/>
            <person name="Huang H."/>
            <person name="Dawson V.L."/>
            <person name="Dawson T.M."/>
        </authorList>
    </citation>
    <scope>INTERACTION WITH PRKN</scope>
    <scope>UBIQUITIN-MEDIATED DEGRADATION</scope>
</reference>
<reference key="6">
    <citation type="journal article" date="2002" name="Mol. Cell. Biol.">
        <title>The septin CDCrel-1 is dispensable for normal development and neurotransmitter release.</title>
        <authorList>
            <person name="Peng X.-R."/>
            <person name="Jia Z."/>
            <person name="Zhang Y."/>
            <person name="Ware J."/>
            <person name="Trimble W.S."/>
        </authorList>
    </citation>
    <scope>INTERACTION WITH SEPTIN2 AND SEPTIN7</scope>
    <scope>LACK OF INTERACTION WITH SEPTIN4</scope>
    <scope>DEVELOPMENTAL STAGE</scope>
    <scope>DISRUPTION PHENOTYPE</scope>
</reference>
<reference key="7">
    <citation type="journal article" date="2002" name="Proc. Natl. Acad. Sci. U.S.A.">
        <title>A prototypic platelet septin and its participation in secretion.</title>
        <authorList>
            <person name="Dent J."/>
            <person name="Kato K."/>
            <person name="Peng X.-R."/>
            <person name="Martinez C."/>
            <person name="Cattaneo M."/>
            <person name="Poujol C."/>
            <person name="Nurden P."/>
            <person name="Nurden A."/>
            <person name="Trimble W.S."/>
            <person name="Ware J."/>
        </authorList>
    </citation>
    <scope>DISRUPTION PHENOTYPE</scope>
    <scope>FUNCTION</scope>
</reference>
<reference key="8">
    <citation type="journal article" date="2004" name="Mol. Cell. Proteomics">
        <title>Phosphoproteomic analysis of the developing mouse brain.</title>
        <authorList>
            <person name="Ballif B.A."/>
            <person name="Villen J."/>
            <person name="Beausoleil S.A."/>
            <person name="Schwartz D."/>
            <person name="Gygi S.P."/>
        </authorList>
    </citation>
    <scope>PHOSPHORYLATION [LARGE SCALE ANALYSIS] AT SER-327 AND THR-336</scope>
    <scope>IDENTIFICATION BY MASS SPECTROMETRY [LARGE SCALE ANALYSIS]</scope>
    <source>
        <tissue>Embryonic brain</tissue>
    </source>
</reference>
<reference key="9">
    <citation type="journal article" date="2007" name="Mol. Cell. Proteomics">
        <title>Qualitative and quantitative analyses of protein phosphorylation in naive and stimulated mouse synaptosomal preparations.</title>
        <authorList>
            <person name="Munton R.P."/>
            <person name="Tweedie-Cullen R."/>
            <person name="Livingstone-Zatchej M."/>
            <person name="Weinandy F."/>
            <person name="Waidelich M."/>
            <person name="Longo D."/>
            <person name="Gehrig P."/>
            <person name="Potthast F."/>
            <person name="Rutishauser D."/>
            <person name="Gerrits B."/>
            <person name="Panse C."/>
            <person name="Schlapbach R."/>
            <person name="Mansuy I.M."/>
        </authorList>
    </citation>
    <scope>IDENTIFICATION BY MASS SPECTROMETRY [LARGE SCALE ANALYSIS]</scope>
    <source>
        <tissue>Brain cortex</tissue>
    </source>
</reference>
<reference key="10">
    <citation type="journal article" date="2007" name="Neuron">
        <title>Sept4, a component of presynaptic scaffold and Lewy bodies, is required for the suppression of alpha-synuclein neurotoxicity.</title>
        <authorList>
            <person name="Ihara M."/>
            <person name="Yamasaki N."/>
            <person name="Hagiwara A."/>
            <person name="Tanigaki A."/>
            <person name="Kitano A."/>
            <person name="Hikawa R."/>
            <person name="Tomimoto H."/>
            <person name="Noda M."/>
            <person name="Takanashi M."/>
            <person name="Mori H."/>
            <person name="Hattori N."/>
            <person name="Miyakawa T."/>
            <person name="Kinoshita M."/>
        </authorList>
    </citation>
    <scope>INTERACTION WITH STX1A</scope>
</reference>
<reference key="11">
    <citation type="journal article" date="2007" name="Proc. Natl. Acad. Sci. U.S.A.">
        <title>Large-scale phosphorylation analysis of mouse liver.</title>
        <authorList>
            <person name="Villen J."/>
            <person name="Beausoleil S.A."/>
            <person name="Gerber S.A."/>
            <person name="Gygi S.P."/>
        </authorList>
    </citation>
    <scope>PHOSPHORYLATION [LARGE SCALE ANALYSIS] AT SER-225</scope>
    <scope>IDENTIFICATION BY MASS SPECTROMETRY [LARGE SCALE ANALYSIS]</scope>
    <source>
        <tissue>Liver</tissue>
    </source>
</reference>
<reference key="12">
    <citation type="journal article" date="2008" name="Neuroscience">
        <title>The Down syndrome candidate dual-specificity tyrosine phosphorylation-regulated kinase 1A phosphorylates the neurodegeneration-related septin 4.</title>
        <authorList>
            <person name="Sitz J.H."/>
            <person name="Baumgaertel K."/>
            <person name="Haemmerle B."/>
            <person name="Papadopoulos C."/>
            <person name="Hekerman P."/>
            <person name="Tejedor F.J."/>
            <person name="Becker W."/>
            <person name="Lutz B."/>
        </authorList>
    </citation>
    <scope>INTERACTION WITH DYRK1A</scope>
    <scope>PHOSPHORYLATION</scope>
</reference>
<reference key="13">
    <citation type="journal article" date="2010" name="Cell">
        <title>A tissue-specific atlas of mouse protein phosphorylation and expression.</title>
        <authorList>
            <person name="Huttlin E.L."/>
            <person name="Jedrychowski M.P."/>
            <person name="Elias J.E."/>
            <person name="Goswami T."/>
            <person name="Rad R."/>
            <person name="Beausoleil S.A."/>
            <person name="Villen J."/>
            <person name="Haas W."/>
            <person name="Sowa M.E."/>
            <person name="Gygi S.P."/>
        </authorList>
    </citation>
    <scope>PHOSPHORYLATION [LARGE SCALE ANALYSIS] AT THR-13; SER-225; SER-327 AND THR-336</scope>
    <scope>IDENTIFICATION BY MASS SPECTROMETRY [LARGE SCALE ANALYSIS]</scope>
    <source>
        <tissue>Brain</tissue>
        <tissue>Heart</tissue>
        <tissue>Kidney</tissue>
        <tissue>Lung</tissue>
        <tissue>Spleen</tissue>
        <tissue>Testis</tissue>
    </source>
</reference>
<reference key="14">
    <citation type="journal article" date="2014" name="Mol. Cell. Proteomics">
        <title>Immunoaffinity enrichment and mass spectrometry analysis of protein methylation.</title>
        <authorList>
            <person name="Guo A."/>
            <person name="Gu H."/>
            <person name="Zhou J."/>
            <person name="Mulhern D."/>
            <person name="Wang Y."/>
            <person name="Lee K.A."/>
            <person name="Yang V."/>
            <person name="Aguiar M."/>
            <person name="Kornhauser J."/>
            <person name="Jia X."/>
            <person name="Ren J."/>
            <person name="Beausoleil S.A."/>
            <person name="Silva J.C."/>
            <person name="Vemulapalli V."/>
            <person name="Bedford M.T."/>
            <person name="Comb M.J."/>
        </authorList>
    </citation>
    <scope>METHYLATION [LARGE SCALE ANALYSIS] AT ARG-168</scope>
    <scope>IDENTIFICATION BY MASS SPECTROMETRY [LARGE SCALE ANALYSIS]</scope>
    <source>
        <tissue>Brain</tissue>
    </source>
</reference>
<feature type="chain" id="PRO_0000173523" description="Septin-5">
    <location>
        <begin position="1"/>
        <end position="369"/>
    </location>
</feature>
<feature type="domain" description="Septin-type G" evidence="3">
    <location>
        <begin position="41"/>
        <end position="314"/>
    </location>
</feature>
<feature type="region of interest" description="G1 motif" evidence="3">
    <location>
        <begin position="51"/>
        <end position="58"/>
    </location>
</feature>
<feature type="region of interest" description="G3 motif" evidence="3">
    <location>
        <begin position="108"/>
        <end position="111"/>
    </location>
</feature>
<feature type="region of interest" description="G4 motif" evidence="3">
    <location>
        <begin position="189"/>
        <end position="192"/>
    </location>
</feature>
<feature type="coiled-coil region" evidence="2">
    <location>
        <begin position="338"/>
        <end position="369"/>
    </location>
</feature>
<feature type="binding site" evidence="1">
    <location>
        <begin position="51"/>
        <end position="58"/>
    </location>
    <ligand>
        <name>GTP</name>
        <dbReference type="ChEBI" id="CHEBI:37565"/>
    </ligand>
</feature>
<feature type="binding site" evidence="1">
    <location>
        <position position="85"/>
    </location>
    <ligand>
        <name>GTP</name>
        <dbReference type="ChEBI" id="CHEBI:37565"/>
    </ligand>
</feature>
<feature type="binding site" evidence="1">
    <location>
        <position position="111"/>
    </location>
    <ligand>
        <name>GTP</name>
        <dbReference type="ChEBI" id="CHEBI:37565"/>
    </ligand>
</feature>
<feature type="binding site" evidence="1">
    <location>
        <begin position="190"/>
        <end position="198"/>
    </location>
    <ligand>
        <name>GTP</name>
        <dbReference type="ChEBI" id="CHEBI:37565"/>
    </ligand>
</feature>
<feature type="binding site" evidence="1">
    <location>
        <position position="248"/>
    </location>
    <ligand>
        <name>GTP</name>
        <dbReference type="ChEBI" id="CHEBI:37565"/>
    </ligand>
</feature>
<feature type="binding site" evidence="1">
    <location>
        <position position="263"/>
    </location>
    <ligand>
        <name>GTP</name>
        <dbReference type="ChEBI" id="CHEBI:37565"/>
    </ligand>
</feature>
<feature type="modified residue" description="Phosphothreonine" evidence="13">
    <location>
        <position position="13"/>
    </location>
</feature>
<feature type="modified residue" description="Omega-N-methylarginine" evidence="14">
    <location>
        <position position="168"/>
    </location>
</feature>
<feature type="modified residue" description="Phosphoserine" evidence="12 13">
    <location>
        <position position="225"/>
    </location>
</feature>
<feature type="modified residue" description="Phosphoserine" evidence="11 13">
    <location>
        <position position="327"/>
    </location>
</feature>
<feature type="modified residue" description="Phosphothreonine" evidence="11 13">
    <location>
        <position position="336"/>
    </location>
</feature>
<name>SEPT5_MOUSE</name>
<comment type="function">
    <text evidence="1 6 9">Filament-forming cytoskeletal GTPase (By similarity). Involved in cytokinesis (Potential). May play a role in platelet secretion.</text>
</comment>
<comment type="subunit">
    <text evidence="1 4 5 7 8">Septins polymerize into heterooligomeric protein complexes that form filaments, and can associate with cellular membranes, actin filaments and microtubules. GTPase activity is required for filament formation (By similarity). Interacts with SEPTIN2 and SEPTIN5. Interaction with SEPTIN4 not detected. In platelets, associated with a complex containing STX4 (By similarity). Interacts with PRKN; this interaction leads to SEPTIN5 ubiquitination and degradation (PubMed:11078524). Interacts with DYRK1A (PubMed:18938227). Interacts with STX1A; in the cerebellar cortex (PubMed:17296554).</text>
</comment>
<comment type="interaction">
    <interactant intactId="EBI-772125">
        <id>Q9Z2Q6</id>
    </interactant>
    <interactant intactId="EBI-716346">
        <id>O60260</id>
        <label>PRKN</label>
    </interactant>
    <organismsDiffer>true</organismsDiffer>
    <experiments>2</experiments>
</comment>
<comment type="subcellular location">
    <subcellularLocation>
        <location evidence="1">Cytoplasm</location>
    </subcellularLocation>
    <subcellularLocation>
        <location evidence="1">Cytoplasm</location>
        <location evidence="1">Cytoskeleton</location>
    </subcellularLocation>
</comment>
<comment type="developmental stage">
    <text evidence="5">Detected at 17 dpc in the brain. Expression increases during postnatal life and reaches a plateau at approximately P10 (at protein level).</text>
</comment>
<comment type="PTM">
    <text evidence="8">Phosphorylated by DYRK1A.</text>
</comment>
<comment type="disruption phenotype">
    <text evidence="5 6">Mice have a normal life-span and show no apparent abnormalities, including synaptic properties and hippocampal neuron growth. In platelets, hyperresponsive degranulation phenotype.</text>
</comment>
<comment type="similarity">
    <text evidence="3">Belongs to the TRAFAC class TrmE-Era-EngA-EngB-Septin-like GTPase superfamily. Septin GTPase family.</text>
</comment>
<sequence length="369" mass="42748">MSTGLRYKSKLATPEDKQDIDKQYVGFATLPNQVHRKSVKKGFDFTLMVAGESGLGKSTLVHSLFLTDLYKDRKLLSAEERINQTVEILKHTVDIEEKGVKLKLTIVDTPGFGDAVNNSECWKPITDYVDQQFEQYFRDESGLNRKNIQDNRVHCCLYFISPFGHGLRPVDVGFMKALHEKVNIVPLIAKADCLVPSEIRKLKDRIREEIDKFGIHVYQFPECDSDEDEDFKQQDRELKESAPFAVIGSNTVVEAKGQRVRGRLYPWGIVEVENQAHCDFVKLRNMLIRTHMHDLKDVTCDVHYENYRAHCIQQMTSKLTQDSRMESPIPILPLPTPDAETEKLIRMKDEELRRMQEMLQKMKQQMQDQ</sequence>
<organism>
    <name type="scientific">Mus musculus</name>
    <name type="common">Mouse</name>
    <dbReference type="NCBI Taxonomy" id="10090"/>
    <lineage>
        <taxon>Eukaryota</taxon>
        <taxon>Metazoa</taxon>
        <taxon>Chordata</taxon>
        <taxon>Craniata</taxon>
        <taxon>Vertebrata</taxon>
        <taxon>Euteleostomi</taxon>
        <taxon>Mammalia</taxon>
        <taxon>Eutheria</taxon>
        <taxon>Euarchontoglires</taxon>
        <taxon>Glires</taxon>
        <taxon>Rodentia</taxon>
        <taxon>Myomorpha</taxon>
        <taxon>Muroidea</taxon>
        <taxon>Muridae</taxon>
        <taxon>Murinae</taxon>
        <taxon>Mus</taxon>
        <taxon>Mus</taxon>
    </lineage>
</organism>
<proteinExistence type="evidence at protein level"/>
<keyword id="KW-0131">Cell cycle</keyword>
<keyword id="KW-0132">Cell division</keyword>
<keyword id="KW-0175">Coiled coil</keyword>
<keyword id="KW-0963">Cytoplasm</keyword>
<keyword id="KW-0206">Cytoskeleton</keyword>
<keyword id="KW-0903">Direct protein sequencing</keyword>
<keyword id="KW-0342">GTP-binding</keyword>
<keyword id="KW-0488">Methylation</keyword>
<keyword id="KW-0547">Nucleotide-binding</keyword>
<keyword id="KW-0597">Phosphoprotein</keyword>
<keyword id="KW-1185">Reference proteome</keyword>
<evidence type="ECO:0000250" key="1"/>
<evidence type="ECO:0000255" key="2"/>
<evidence type="ECO:0000255" key="3">
    <source>
        <dbReference type="PROSITE-ProRule" id="PRU01056"/>
    </source>
</evidence>
<evidence type="ECO:0000269" key="4">
    <source>
    </source>
</evidence>
<evidence type="ECO:0000269" key="5">
    <source>
    </source>
</evidence>
<evidence type="ECO:0000269" key="6">
    <source>
    </source>
</evidence>
<evidence type="ECO:0000269" key="7">
    <source>
    </source>
</evidence>
<evidence type="ECO:0000269" key="8">
    <source>
    </source>
</evidence>
<evidence type="ECO:0000305" key="9"/>
<evidence type="ECO:0000312" key="10">
    <source>
        <dbReference type="MGI" id="MGI:1195461"/>
    </source>
</evidence>
<evidence type="ECO:0007744" key="11">
    <source>
    </source>
</evidence>
<evidence type="ECO:0007744" key="12">
    <source>
    </source>
</evidence>
<evidence type="ECO:0007744" key="13">
    <source>
    </source>
</evidence>
<evidence type="ECO:0007744" key="14">
    <source>
    </source>
</evidence>
<accession>Q9Z2Q6</accession>
<accession>B2RUC5</accession>
<accession>Q3UYG4</accession>
<accession>Q6PB74</accession>
<gene>
    <name evidence="10" type="primary">Septin5</name>
    <name evidence="10" type="synonym">Pnutl1</name>
    <name evidence="10" type="synonym">Sept5</name>
</gene>